<feature type="chain" id="PRO_1000049053" description="Large ribosomal subunit protein bL20">
    <location>
        <begin position="1"/>
        <end position="129"/>
    </location>
</feature>
<evidence type="ECO:0000255" key="1">
    <source>
        <dbReference type="HAMAP-Rule" id="MF_00382"/>
    </source>
</evidence>
<evidence type="ECO:0000305" key="2"/>
<keyword id="KW-0687">Ribonucleoprotein</keyword>
<keyword id="KW-0689">Ribosomal protein</keyword>
<keyword id="KW-0694">RNA-binding</keyword>
<keyword id="KW-0699">rRNA-binding</keyword>
<accession>Q0SI47</accession>
<dbReference type="EMBL" id="CP000431">
    <property type="protein sequence ID" value="ABG92789.1"/>
    <property type="molecule type" value="Genomic_DNA"/>
</dbReference>
<dbReference type="RefSeq" id="WP_005247385.1">
    <property type="nucleotide sequence ID" value="NC_008268.1"/>
</dbReference>
<dbReference type="SMR" id="Q0SI47"/>
<dbReference type="GeneID" id="69892619"/>
<dbReference type="KEGG" id="rha:RHA1_ro00961"/>
<dbReference type="eggNOG" id="COG0292">
    <property type="taxonomic scope" value="Bacteria"/>
</dbReference>
<dbReference type="HOGENOM" id="CLU_123265_0_0_11"/>
<dbReference type="OrthoDB" id="9808966at2"/>
<dbReference type="Proteomes" id="UP000008710">
    <property type="component" value="Chromosome"/>
</dbReference>
<dbReference type="GO" id="GO:1990904">
    <property type="term" value="C:ribonucleoprotein complex"/>
    <property type="evidence" value="ECO:0007669"/>
    <property type="project" value="UniProtKB-KW"/>
</dbReference>
<dbReference type="GO" id="GO:0005840">
    <property type="term" value="C:ribosome"/>
    <property type="evidence" value="ECO:0007669"/>
    <property type="project" value="UniProtKB-KW"/>
</dbReference>
<dbReference type="GO" id="GO:0019843">
    <property type="term" value="F:rRNA binding"/>
    <property type="evidence" value="ECO:0007669"/>
    <property type="project" value="UniProtKB-UniRule"/>
</dbReference>
<dbReference type="GO" id="GO:0003735">
    <property type="term" value="F:structural constituent of ribosome"/>
    <property type="evidence" value="ECO:0007669"/>
    <property type="project" value="InterPro"/>
</dbReference>
<dbReference type="GO" id="GO:0000027">
    <property type="term" value="P:ribosomal large subunit assembly"/>
    <property type="evidence" value="ECO:0007669"/>
    <property type="project" value="UniProtKB-UniRule"/>
</dbReference>
<dbReference type="GO" id="GO:0006412">
    <property type="term" value="P:translation"/>
    <property type="evidence" value="ECO:0007669"/>
    <property type="project" value="InterPro"/>
</dbReference>
<dbReference type="CDD" id="cd07026">
    <property type="entry name" value="Ribosomal_L20"/>
    <property type="match status" value="1"/>
</dbReference>
<dbReference type="FunFam" id="1.10.1900.20:FF:000001">
    <property type="entry name" value="50S ribosomal protein L20"/>
    <property type="match status" value="1"/>
</dbReference>
<dbReference type="Gene3D" id="6.10.160.10">
    <property type="match status" value="1"/>
</dbReference>
<dbReference type="Gene3D" id="1.10.1900.20">
    <property type="entry name" value="Ribosomal protein L20"/>
    <property type="match status" value="1"/>
</dbReference>
<dbReference type="HAMAP" id="MF_00382">
    <property type="entry name" value="Ribosomal_bL20"/>
    <property type="match status" value="1"/>
</dbReference>
<dbReference type="InterPro" id="IPR005813">
    <property type="entry name" value="Ribosomal_bL20"/>
</dbReference>
<dbReference type="InterPro" id="IPR049946">
    <property type="entry name" value="RIBOSOMAL_L20_CS"/>
</dbReference>
<dbReference type="InterPro" id="IPR035566">
    <property type="entry name" value="Ribosomal_protein_bL20_C"/>
</dbReference>
<dbReference type="NCBIfam" id="TIGR01032">
    <property type="entry name" value="rplT_bact"/>
    <property type="match status" value="1"/>
</dbReference>
<dbReference type="PANTHER" id="PTHR10986">
    <property type="entry name" value="39S RIBOSOMAL PROTEIN L20"/>
    <property type="match status" value="1"/>
</dbReference>
<dbReference type="Pfam" id="PF00453">
    <property type="entry name" value="Ribosomal_L20"/>
    <property type="match status" value="1"/>
</dbReference>
<dbReference type="PRINTS" id="PR00062">
    <property type="entry name" value="RIBOSOMALL20"/>
</dbReference>
<dbReference type="SUPFAM" id="SSF74731">
    <property type="entry name" value="Ribosomal protein L20"/>
    <property type="match status" value="1"/>
</dbReference>
<dbReference type="PROSITE" id="PS00937">
    <property type="entry name" value="RIBOSOMAL_L20"/>
    <property type="match status" value="1"/>
</dbReference>
<name>RL20_RHOJR</name>
<organism>
    <name type="scientific">Rhodococcus jostii (strain RHA1)</name>
    <dbReference type="NCBI Taxonomy" id="101510"/>
    <lineage>
        <taxon>Bacteria</taxon>
        <taxon>Bacillati</taxon>
        <taxon>Actinomycetota</taxon>
        <taxon>Actinomycetes</taxon>
        <taxon>Mycobacteriales</taxon>
        <taxon>Nocardiaceae</taxon>
        <taxon>Rhodococcus</taxon>
    </lineage>
</organism>
<comment type="function">
    <text evidence="1">Binds directly to 23S ribosomal RNA and is necessary for the in vitro assembly process of the 50S ribosomal subunit. It is not involved in the protein synthesizing functions of that subunit.</text>
</comment>
<comment type="similarity">
    <text evidence="1">Belongs to the bacterial ribosomal protein bL20 family.</text>
</comment>
<reference key="1">
    <citation type="journal article" date="2006" name="Proc. Natl. Acad. Sci. U.S.A.">
        <title>The complete genome of Rhodococcus sp. RHA1 provides insights into a catabolic powerhouse.</title>
        <authorList>
            <person name="McLeod M.P."/>
            <person name="Warren R.L."/>
            <person name="Hsiao W.W.L."/>
            <person name="Araki N."/>
            <person name="Myhre M."/>
            <person name="Fernandes C."/>
            <person name="Miyazawa D."/>
            <person name="Wong W."/>
            <person name="Lillquist A.L."/>
            <person name="Wang D."/>
            <person name="Dosanjh M."/>
            <person name="Hara H."/>
            <person name="Petrescu A."/>
            <person name="Morin R.D."/>
            <person name="Yang G."/>
            <person name="Stott J.M."/>
            <person name="Schein J.E."/>
            <person name="Shin H."/>
            <person name="Smailus D."/>
            <person name="Siddiqui A.S."/>
            <person name="Marra M.A."/>
            <person name="Jones S.J.M."/>
            <person name="Holt R."/>
            <person name="Brinkman F.S.L."/>
            <person name="Miyauchi K."/>
            <person name="Fukuda M."/>
            <person name="Davies J.E."/>
            <person name="Mohn W.W."/>
            <person name="Eltis L.D."/>
        </authorList>
    </citation>
    <scope>NUCLEOTIDE SEQUENCE [LARGE SCALE GENOMIC DNA]</scope>
    <source>
        <strain>RHA1</strain>
    </source>
</reference>
<sequence>MARVKRAVNAQKKRRSILEASSGYRGQRSRLYRKAKEQQLHSLTYAYRDRRARKGDFRKLWITRINAAARANDITYNRLIQGLRLAEIEVDRKNLAELAVSDAAAFAGLVALAKAALPADVNAPAGEAA</sequence>
<gene>
    <name evidence="1" type="primary">rplT</name>
    <name type="ordered locus">RHA1_ro00961</name>
</gene>
<proteinExistence type="inferred from homology"/>
<protein>
    <recommendedName>
        <fullName evidence="1">Large ribosomal subunit protein bL20</fullName>
    </recommendedName>
    <alternativeName>
        <fullName evidence="2">50S ribosomal protein L20</fullName>
    </alternativeName>
</protein>